<comment type="function">
    <text evidence="1 8 9 10 11 12 13 17 18">Catalyzes the transport of triglyceride, cholesteryl ester, and phospholipid between phospholipid surfaces (PubMed:15897609, PubMed:16478722, PubMed:22236406, PubMed:23475612, PubMed:25108285, PubMed:26224785, PubMed:8876250, PubMed:8939939). Required for the assembly and secretion of plasma lipoproteins that contain apolipoprotein B (PubMed:16478722, PubMed:23475612, PubMed:26224785, PubMed:8876250, PubMed:8939939). May be involved in regulating cholesteryl ester biosynthesis in cells that produce lipoproteins (By similarity).</text>
</comment>
<comment type="catalytic activity">
    <reaction evidence="9 17">
        <text>a 1,2-diacyl-sn-glycero-3-phosphocholine(in) = a 1,2-diacyl-sn-glycero-3-phosphocholine(out)</text>
        <dbReference type="Rhea" id="RHEA:38571"/>
        <dbReference type="ChEBI" id="CHEBI:57643"/>
    </reaction>
    <physiologicalReaction direction="left-to-right" evidence="21">
        <dbReference type="Rhea" id="RHEA:38572"/>
    </physiologicalReaction>
</comment>
<comment type="catalytic activity">
    <reaction evidence="8 9">
        <text>a 1,2-diacyl-sn-glycero-3-phosphoethanolamine(in) = a 1,2-diacyl-sn-glycero-3-phosphoethanolamine(out)</text>
        <dbReference type="Rhea" id="RHEA:38895"/>
        <dbReference type="ChEBI" id="CHEBI:64612"/>
    </reaction>
    <physiologicalReaction direction="left-to-right" evidence="21">
        <dbReference type="Rhea" id="RHEA:38896"/>
    </physiologicalReaction>
</comment>
<comment type="catalytic activity">
    <reaction evidence="8 9 17">
        <text>a cholesterol ester(in) = a cholesterol ester(out)</text>
        <dbReference type="Rhea" id="RHEA:39007"/>
        <dbReference type="ChEBI" id="CHEBI:17002"/>
    </reaction>
    <physiologicalReaction direction="left-to-right" evidence="21">
        <dbReference type="Rhea" id="RHEA:39008"/>
    </physiologicalReaction>
</comment>
<comment type="catalytic activity">
    <reaction evidence="8 9 17">
        <text>a triacyl-sn-glycerol(in) = a triacyl-sn-glycerol(out)</text>
        <dbReference type="Rhea" id="RHEA:39011"/>
        <dbReference type="ChEBI" id="CHEBI:64615"/>
    </reaction>
    <physiologicalReaction direction="left-to-right" evidence="21">
        <dbReference type="Rhea" id="RHEA:39012"/>
    </physiologicalReaction>
</comment>
<comment type="subunit">
    <text evidence="1 9 11 12 13 14">Heterodimer; heterodimerizes with the protein disulfide isomerase (P4HB/PDI) (PubMed:16478722, PubMed:23475612, PubMed:25108285, PubMed:26224785). Interacts with APOB (PubMed:25108285, PubMed:26224785, PubMed:27206948). Interacts with PRAP1 (By similarity).</text>
</comment>
<comment type="interaction">
    <interactant intactId="EBI-11614052">
        <id>P55157</id>
    </interactant>
    <interactant intactId="EBI-3926040">
        <id>P04114</id>
        <label>APOB</label>
    </interactant>
    <organismsDiffer>false</organismsDiffer>
    <experiments>4</experiments>
</comment>
<comment type="interaction">
    <interactant intactId="EBI-11614052">
        <id>P55157</id>
    </interactant>
    <interactant intactId="EBI-22054129">
        <id>Q4VIT4</id>
        <label>PDIA3</label>
    </interactant>
    <organismsDiffer>true</organismsDiffer>
    <experiments>5</experiments>
</comment>
<comment type="subcellular location">
    <subcellularLocation>
        <location evidence="9 10 11 13">Endoplasmic reticulum</location>
    </subcellularLocation>
    <subcellularLocation>
        <location evidence="9">Golgi apparatus</location>
    </subcellularLocation>
    <text evidence="11 13">Colocalizes with P4HB/PDI in the endoplasmic reticulum (PubMed:23475612, PubMed:26224785).</text>
</comment>
<comment type="alternative products">
    <event type="alternative splicing"/>
    <isoform>
        <id>P55157-1</id>
        <name>1</name>
        <sequence type="displayed"/>
    </isoform>
    <isoform>
        <id>P55157-2</id>
        <name>2</name>
        <sequence type="described" ref="VSP_056325 VSP_056326"/>
    </isoform>
</comment>
<comment type="tissue specificity">
    <text evidence="15">Liver and small intestine. Also found in ovary, testis and kidney.</text>
</comment>
<comment type="induction">
    <text evidence="15">Positively regulated by cholesterol and negatively regulated by insulin.</text>
</comment>
<comment type="disease" evidence="4 5 10 11 12 13 18">
    <disease id="DI-00014">
        <name>Abetalipoproteinemia</name>
        <acronym>ABL</acronym>
        <description>An autosomal recessive disorder of lipoprotein metabolism. Affected individuals produce virtually no circulating apolipoprotein B-containing lipoproteins (chylomicrons, VLDL, LDL, lipoprotein(A)). Malabsorption of the antioxidant vitamin E occurs, leading to spinocerebellar and retinal degeneration.</description>
        <dbReference type="MIM" id="200100"/>
    </disease>
    <text>The disease is caused by variants affecting the gene represented in this entry.</text>
</comment>
<protein>
    <recommendedName>
        <fullName>Microsomal triglyceride transfer protein large subunit</fullName>
    </recommendedName>
</protein>
<keyword id="KW-0002">3D-structure</keyword>
<keyword id="KW-0025">Alternative splicing</keyword>
<keyword id="KW-0225">Disease variant</keyword>
<keyword id="KW-1015">Disulfide bond</keyword>
<keyword id="KW-0256">Endoplasmic reticulum</keyword>
<keyword id="KW-0333">Golgi apparatus</keyword>
<keyword id="KW-0445">Lipid transport</keyword>
<keyword id="KW-0446">Lipid-binding</keyword>
<keyword id="KW-1267">Proteomics identification</keyword>
<keyword id="KW-1185">Reference proteome</keyword>
<keyword id="KW-0732">Signal</keyword>
<keyword id="KW-0813">Transport</keyword>
<proteinExistence type="evidence at protein level"/>
<dbReference type="EMBL" id="X75500">
    <property type="protein sequence ID" value="CAA53217.1"/>
    <property type="molecule type" value="mRNA"/>
</dbReference>
<dbReference type="EMBL" id="X59657">
    <property type="protein sequence ID" value="CAA42200.1"/>
    <property type="molecule type" value="mRNA"/>
</dbReference>
<dbReference type="EMBL" id="X83013">
    <property type="protein sequence ID" value="CAA58142.1"/>
    <property type="molecule type" value="Genomic_DNA"/>
</dbReference>
<dbReference type="EMBL" id="X83014">
    <property type="protein sequence ID" value="CAA58142.1"/>
    <property type="status" value="JOINED"/>
    <property type="molecule type" value="Genomic_DNA"/>
</dbReference>
<dbReference type="EMBL" id="X83015">
    <property type="protein sequence ID" value="CAA58142.1"/>
    <property type="status" value="JOINED"/>
    <property type="molecule type" value="Genomic_DNA"/>
</dbReference>
<dbReference type="EMBL" id="X83016">
    <property type="protein sequence ID" value="CAA58142.1"/>
    <property type="status" value="JOINED"/>
    <property type="molecule type" value="Genomic_DNA"/>
</dbReference>
<dbReference type="EMBL" id="X83017">
    <property type="protein sequence ID" value="CAA58142.1"/>
    <property type="status" value="JOINED"/>
    <property type="molecule type" value="Genomic_DNA"/>
</dbReference>
<dbReference type="EMBL" id="X83018">
    <property type="protein sequence ID" value="CAA58142.1"/>
    <property type="status" value="JOINED"/>
    <property type="molecule type" value="Genomic_DNA"/>
</dbReference>
<dbReference type="EMBL" id="X83019">
    <property type="protein sequence ID" value="CAA58142.1"/>
    <property type="status" value="JOINED"/>
    <property type="molecule type" value="Genomic_DNA"/>
</dbReference>
<dbReference type="EMBL" id="X83020">
    <property type="protein sequence ID" value="CAA58142.1"/>
    <property type="status" value="JOINED"/>
    <property type="molecule type" value="Genomic_DNA"/>
</dbReference>
<dbReference type="EMBL" id="X83021">
    <property type="protein sequence ID" value="CAA58142.1"/>
    <property type="status" value="JOINED"/>
    <property type="molecule type" value="Genomic_DNA"/>
</dbReference>
<dbReference type="EMBL" id="X83022">
    <property type="protein sequence ID" value="CAA58142.1"/>
    <property type="status" value="JOINED"/>
    <property type="molecule type" value="Genomic_DNA"/>
</dbReference>
<dbReference type="EMBL" id="X83023">
    <property type="protein sequence ID" value="CAA58142.1"/>
    <property type="status" value="JOINED"/>
    <property type="molecule type" value="Genomic_DNA"/>
</dbReference>
<dbReference type="EMBL" id="X83024">
    <property type="protein sequence ID" value="CAA58142.1"/>
    <property type="status" value="JOINED"/>
    <property type="molecule type" value="Genomic_DNA"/>
</dbReference>
<dbReference type="EMBL" id="X83025">
    <property type="protein sequence ID" value="CAA58142.1"/>
    <property type="status" value="JOINED"/>
    <property type="molecule type" value="Genomic_DNA"/>
</dbReference>
<dbReference type="EMBL" id="X83026">
    <property type="protein sequence ID" value="CAA58142.1"/>
    <property type="status" value="JOINED"/>
    <property type="molecule type" value="Genomic_DNA"/>
</dbReference>
<dbReference type="EMBL" id="X83027">
    <property type="protein sequence ID" value="CAA58142.1"/>
    <property type="status" value="JOINED"/>
    <property type="molecule type" value="Genomic_DNA"/>
</dbReference>
<dbReference type="EMBL" id="X83028">
    <property type="protein sequence ID" value="CAA58142.1"/>
    <property type="status" value="JOINED"/>
    <property type="molecule type" value="Genomic_DNA"/>
</dbReference>
<dbReference type="EMBL" id="X83029">
    <property type="protein sequence ID" value="CAA58142.1"/>
    <property type="status" value="JOINED"/>
    <property type="molecule type" value="Genomic_DNA"/>
</dbReference>
<dbReference type="EMBL" id="X83030">
    <property type="protein sequence ID" value="CAA58142.1"/>
    <property type="status" value="JOINED"/>
    <property type="molecule type" value="Genomic_DNA"/>
</dbReference>
<dbReference type="EMBL" id="AK290793">
    <property type="protein sequence ID" value="BAF83482.1"/>
    <property type="molecule type" value="mRNA"/>
</dbReference>
<dbReference type="EMBL" id="AC083902">
    <property type="status" value="NOT_ANNOTATED_CDS"/>
    <property type="molecule type" value="Genomic_DNA"/>
</dbReference>
<dbReference type="EMBL" id="BC062696">
    <property type="protein sequence ID" value="AAH62696.1"/>
    <property type="molecule type" value="mRNA"/>
</dbReference>
<dbReference type="EMBL" id="BC125110">
    <property type="protein sequence ID" value="AAI25111.1"/>
    <property type="molecule type" value="mRNA"/>
</dbReference>
<dbReference type="EMBL" id="BC125111">
    <property type="protein sequence ID" value="AAI25112.1"/>
    <property type="molecule type" value="mRNA"/>
</dbReference>
<dbReference type="CCDS" id="CCDS3651.1">
    <molecule id="P55157-1"/>
</dbReference>
<dbReference type="PIR" id="I38047">
    <property type="entry name" value="I38047"/>
</dbReference>
<dbReference type="RefSeq" id="NP_000244.2">
    <molecule id="P55157-1"/>
    <property type="nucleotide sequence ID" value="NM_000253.4"/>
</dbReference>
<dbReference type="RefSeq" id="NP_001287714.1">
    <property type="nucleotide sequence ID" value="NM_001300785.1"/>
</dbReference>
<dbReference type="RefSeq" id="NP_001373069.1">
    <molecule id="P55157-1"/>
    <property type="nucleotide sequence ID" value="NM_001386140.1"/>
</dbReference>
<dbReference type="PDB" id="8EOJ">
    <property type="method" value="EM"/>
    <property type="resolution" value="3.07 A"/>
    <property type="chains" value="B=1-894"/>
</dbReference>
<dbReference type="PDBsum" id="8EOJ"/>
<dbReference type="EMDB" id="EMD-28377"/>
<dbReference type="SMR" id="P55157"/>
<dbReference type="BioGRID" id="110641">
    <property type="interactions" value="12"/>
</dbReference>
<dbReference type="CORUM" id="P55157"/>
<dbReference type="FunCoup" id="P55157">
    <property type="interactions" value="451"/>
</dbReference>
<dbReference type="IntAct" id="P55157">
    <property type="interactions" value="6"/>
</dbReference>
<dbReference type="STRING" id="9606.ENSP00000427679"/>
<dbReference type="BindingDB" id="P55157"/>
<dbReference type="ChEMBL" id="CHEMBL2569"/>
<dbReference type="DrugBank" id="DB11399">
    <property type="generic name" value="Dirlotapide"/>
</dbReference>
<dbReference type="DrugBank" id="DB12934">
    <property type="generic name" value="Granotapide"/>
</dbReference>
<dbReference type="DrugBank" id="DB01094">
    <property type="generic name" value="Hesperetin"/>
</dbReference>
<dbReference type="DrugBank" id="DB04852">
    <property type="generic name" value="Implitapide"/>
</dbReference>
<dbReference type="DrugBank" id="DB08827">
    <property type="generic name" value="Lomitapide"/>
</dbReference>
<dbReference type="DrugBank" id="DB05678">
    <property type="generic name" value="SLx-4090"/>
</dbReference>
<dbReference type="DrugBank" id="DB12414">
    <property type="generic name" value="Usistapide"/>
</dbReference>
<dbReference type="DrugCentral" id="P55157"/>
<dbReference type="SwissLipids" id="SLP:000000411"/>
<dbReference type="GlyGen" id="P55157">
    <property type="glycosylation" value="2 sites, 1 O-linked glycan (1 site)"/>
</dbReference>
<dbReference type="iPTMnet" id="P55157"/>
<dbReference type="PhosphoSitePlus" id="P55157"/>
<dbReference type="BioMuta" id="MTTP"/>
<dbReference type="DMDM" id="1709167"/>
<dbReference type="jPOST" id="P55157"/>
<dbReference type="MassIVE" id="P55157"/>
<dbReference type="PaxDb" id="9606-ENSP00000427679"/>
<dbReference type="PeptideAtlas" id="P55157"/>
<dbReference type="ProteomicsDB" id="56794">
    <molecule id="P55157-1"/>
</dbReference>
<dbReference type="ProteomicsDB" id="67006"/>
<dbReference type="Antibodypedia" id="25923">
    <property type="antibodies" value="239 antibodies from 30 providers"/>
</dbReference>
<dbReference type="DNASU" id="4547"/>
<dbReference type="Ensembl" id="ENST00000265517.10">
    <molecule id="P55157-1"/>
    <property type="protein sequence ID" value="ENSP00000265517.5"/>
    <property type="gene ID" value="ENSG00000138823.14"/>
</dbReference>
<dbReference type="Ensembl" id="ENST00000422897.6">
    <molecule id="P55157-2"/>
    <property type="protein sequence ID" value="ENSP00000407350.2"/>
    <property type="gene ID" value="ENSG00000138823.14"/>
</dbReference>
<dbReference type="Ensembl" id="ENST00000457717.6">
    <molecule id="P55157-1"/>
    <property type="protein sequence ID" value="ENSP00000400821.1"/>
    <property type="gene ID" value="ENSG00000138823.14"/>
</dbReference>
<dbReference type="GeneID" id="4547"/>
<dbReference type="KEGG" id="hsa:4547"/>
<dbReference type="MANE-Select" id="ENST00000265517.10">
    <property type="protein sequence ID" value="ENSP00000265517.5"/>
    <property type="RefSeq nucleotide sequence ID" value="NM_001386140.1"/>
    <property type="RefSeq protein sequence ID" value="NP_001373069.1"/>
</dbReference>
<dbReference type="UCSC" id="uc003hvb.4">
    <molecule id="P55157-1"/>
    <property type="organism name" value="human"/>
</dbReference>
<dbReference type="AGR" id="HGNC:7467"/>
<dbReference type="CTD" id="4547"/>
<dbReference type="DisGeNET" id="4547"/>
<dbReference type="GeneCards" id="MTTP"/>
<dbReference type="GeneReviews" id="MTTP"/>
<dbReference type="HGNC" id="HGNC:7467">
    <property type="gene designation" value="MTTP"/>
</dbReference>
<dbReference type="HPA" id="ENSG00000138823">
    <property type="expression patterns" value="Group enriched (intestine, liver)"/>
</dbReference>
<dbReference type="MalaCards" id="MTTP"/>
<dbReference type="MIM" id="157147">
    <property type="type" value="gene"/>
</dbReference>
<dbReference type="MIM" id="200100">
    <property type="type" value="phenotype"/>
</dbReference>
<dbReference type="neXtProt" id="NX_P55157"/>
<dbReference type="OpenTargets" id="ENSG00000138823"/>
<dbReference type="Orphanet" id="14">
    <property type="disease" value="Abetalipoproteinemia"/>
</dbReference>
<dbReference type="PharmGKB" id="PA164742099"/>
<dbReference type="VEuPathDB" id="HostDB:ENSG00000138823"/>
<dbReference type="eggNOG" id="KOG4337">
    <property type="taxonomic scope" value="Eukaryota"/>
</dbReference>
<dbReference type="GeneTree" id="ENSGT00390000011412"/>
<dbReference type="HOGENOM" id="CLU_014703_0_0_1"/>
<dbReference type="InParanoid" id="P55157"/>
<dbReference type="OMA" id="HVWGGSA"/>
<dbReference type="OrthoDB" id="5865932at2759"/>
<dbReference type="PAN-GO" id="P55157">
    <property type="GO annotations" value="6 GO annotations based on evolutionary models"/>
</dbReference>
<dbReference type="PhylomeDB" id="P55157"/>
<dbReference type="TreeFam" id="TF328754"/>
<dbReference type="PathwayCommons" id="P55157"/>
<dbReference type="Reactome" id="R-HSA-8866423">
    <property type="pathway name" value="VLDL assembly"/>
</dbReference>
<dbReference type="Reactome" id="R-HSA-8963888">
    <property type="pathway name" value="Chylomicron assembly"/>
</dbReference>
<dbReference type="Reactome" id="R-HSA-8964041">
    <property type="pathway name" value="LDL remodeling"/>
</dbReference>
<dbReference type="SignaLink" id="P55157"/>
<dbReference type="SIGNOR" id="P55157"/>
<dbReference type="BioGRID-ORCS" id="4547">
    <property type="hits" value="9 hits in 1162 CRISPR screens"/>
</dbReference>
<dbReference type="ChiTaRS" id="MTTP">
    <property type="organism name" value="human"/>
</dbReference>
<dbReference type="GeneWiki" id="Microsomal_triglyceride_transfer_protein"/>
<dbReference type="GenomeRNAi" id="4547"/>
<dbReference type="Pharos" id="P55157">
    <property type="development level" value="Tclin"/>
</dbReference>
<dbReference type="PRO" id="PR:P55157"/>
<dbReference type="Proteomes" id="UP000005640">
    <property type="component" value="Chromosome 4"/>
</dbReference>
<dbReference type="RNAct" id="P55157">
    <property type="molecule type" value="protein"/>
</dbReference>
<dbReference type="Bgee" id="ENSG00000138823">
    <property type="expression patterns" value="Expressed in jejunal mucosa and 104 other cell types or tissues"/>
</dbReference>
<dbReference type="ExpressionAtlas" id="P55157">
    <property type="expression patterns" value="baseline and differential"/>
</dbReference>
<dbReference type="GO" id="GO:0016323">
    <property type="term" value="C:basolateral plasma membrane"/>
    <property type="evidence" value="ECO:0000318"/>
    <property type="project" value="GO_Central"/>
</dbReference>
<dbReference type="GO" id="GO:0031526">
    <property type="term" value="C:brush border membrane"/>
    <property type="evidence" value="ECO:0007669"/>
    <property type="project" value="Ensembl"/>
</dbReference>
<dbReference type="GO" id="GO:0005829">
    <property type="term" value="C:cytosol"/>
    <property type="evidence" value="ECO:0000314"/>
    <property type="project" value="HPA"/>
</dbReference>
<dbReference type="GO" id="GO:0005783">
    <property type="term" value="C:endoplasmic reticulum"/>
    <property type="evidence" value="ECO:0000314"/>
    <property type="project" value="HPA"/>
</dbReference>
<dbReference type="GO" id="GO:0005788">
    <property type="term" value="C:endoplasmic reticulum lumen"/>
    <property type="evidence" value="ECO:0000304"/>
    <property type="project" value="Reactome"/>
</dbReference>
<dbReference type="GO" id="GO:0005794">
    <property type="term" value="C:Golgi apparatus"/>
    <property type="evidence" value="ECO:0000314"/>
    <property type="project" value="UniProtKB"/>
</dbReference>
<dbReference type="GO" id="GO:0031528">
    <property type="term" value="C:microvillus membrane"/>
    <property type="evidence" value="ECO:0007669"/>
    <property type="project" value="Ensembl"/>
</dbReference>
<dbReference type="GO" id="GO:0043235">
    <property type="term" value="C:receptor complex"/>
    <property type="evidence" value="ECO:0000314"/>
    <property type="project" value="MGI"/>
</dbReference>
<dbReference type="GO" id="GO:0031982">
    <property type="term" value="C:vesicle"/>
    <property type="evidence" value="ECO:0007669"/>
    <property type="project" value="Ensembl"/>
</dbReference>
<dbReference type="GO" id="GO:0034185">
    <property type="term" value="F:apolipoprotein binding"/>
    <property type="evidence" value="ECO:0007669"/>
    <property type="project" value="Ensembl"/>
</dbReference>
<dbReference type="GO" id="GO:1902388">
    <property type="term" value="F:ceramide 1-phosphate transfer activity"/>
    <property type="evidence" value="ECO:0000314"/>
    <property type="project" value="GO_Central"/>
</dbReference>
<dbReference type="GO" id="GO:0120020">
    <property type="term" value="F:cholesterol transfer activity"/>
    <property type="evidence" value="ECO:0000314"/>
    <property type="project" value="UniProtKB"/>
</dbReference>
<dbReference type="GO" id="GO:0008289">
    <property type="term" value="F:lipid binding"/>
    <property type="evidence" value="ECO:0007669"/>
    <property type="project" value="UniProtKB-KW"/>
</dbReference>
<dbReference type="GO" id="GO:0005319">
    <property type="term" value="F:lipid transporter activity"/>
    <property type="evidence" value="ECO:0000304"/>
    <property type="project" value="Reactome"/>
</dbReference>
<dbReference type="GO" id="GO:0120019">
    <property type="term" value="F:phosphatidylcholine transfer activity"/>
    <property type="evidence" value="ECO:0000314"/>
    <property type="project" value="UniProtKB"/>
</dbReference>
<dbReference type="GO" id="GO:1904121">
    <property type="term" value="F:phosphatidylethanolamine transfer activity"/>
    <property type="evidence" value="ECO:0000314"/>
    <property type="project" value="UniProtKB"/>
</dbReference>
<dbReference type="GO" id="GO:0120014">
    <property type="term" value="F:phospholipid transfer activity"/>
    <property type="evidence" value="ECO:0000314"/>
    <property type="project" value="GO_Central"/>
</dbReference>
<dbReference type="GO" id="GO:0005548">
    <property type="term" value="F:phospholipid transporter activity"/>
    <property type="evidence" value="ECO:0000318"/>
    <property type="project" value="GO_Central"/>
</dbReference>
<dbReference type="GO" id="GO:0046982">
    <property type="term" value="F:protein heterodimerization activity"/>
    <property type="evidence" value="ECO:0000314"/>
    <property type="project" value="UniProtKB"/>
</dbReference>
<dbReference type="GO" id="GO:0044877">
    <property type="term" value="F:protein-containing complex binding"/>
    <property type="evidence" value="ECO:0007669"/>
    <property type="project" value="Ensembl"/>
</dbReference>
<dbReference type="GO" id="GO:0140344">
    <property type="term" value="F:triglyceride transfer activity"/>
    <property type="evidence" value="ECO:0000314"/>
    <property type="project" value="UniProtKB"/>
</dbReference>
<dbReference type="GO" id="GO:0042632">
    <property type="term" value="P:cholesterol homeostasis"/>
    <property type="evidence" value="ECO:0000318"/>
    <property type="project" value="GO_Central"/>
</dbReference>
<dbReference type="GO" id="GO:0034378">
    <property type="term" value="P:chylomicron assembly"/>
    <property type="evidence" value="ECO:0000304"/>
    <property type="project" value="Reactome"/>
</dbReference>
<dbReference type="GO" id="GO:0007623">
    <property type="term" value="P:circadian rhythm"/>
    <property type="evidence" value="ECO:0007669"/>
    <property type="project" value="Ensembl"/>
</dbReference>
<dbReference type="GO" id="GO:0051649">
    <property type="term" value="P:establishment of localization in cell"/>
    <property type="evidence" value="ECO:0007669"/>
    <property type="project" value="Ensembl"/>
</dbReference>
<dbReference type="GO" id="GO:0006629">
    <property type="term" value="P:lipid metabolic process"/>
    <property type="evidence" value="ECO:0000304"/>
    <property type="project" value="ProtInc"/>
</dbReference>
<dbReference type="GO" id="GO:0042157">
    <property type="term" value="P:lipoprotein metabolic process"/>
    <property type="evidence" value="ECO:0000318"/>
    <property type="project" value="GO_Central"/>
</dbReference>
<dbReference type="GO" id="GO:0042953">
    <property type="term" value="P:lipoprotein transport"/>
    <property type="evidence" value="ECO:0007669"/>
    <property type="project" value="Ensembl"/>
</dbReference>
<dbReference type="GO" id="GO:0034374">
    <property type="term" value="P:low-density lipoprotein particle remodeling"/>
    <property type="evidence" value="ECO:0007669"/>
    <property type="project" value="Ensembl"/>
</dbReference>
<dbReference type="GO" id="GO:0015914">
    <property type="term" value="P:phospholipid transport"/>
    <property type="evidence" value="ECO:0000314"/>
    <property type="project" value="UniProtKB"/>
</dbReference>
<dbReference type="GO" id="GO:0034377">
    <property type="term" value="P:plasma lipoprotein particle assembly"/>
    <property type="evidence" value="ECO:0000314"/>
    <property type="project" value="UniProtKB"/>
</dbReference>
<dbReference type="GO" id="GO:0009306">
    <property type="term" value="P:protein secretion"/>
    <property type="evidence" value="ECO:0000314"/>
    <property type="project" value="UniProtKB"/>
</dbReference>
<dbReference type="GO" id="GO:0051592">
    <property type="term" value="P:response to calcium ion"/>
    <property type="evidence" value="ECO:0007669"/>
    <property type="project" value="Ensembl"/>
</dbReference>
<dbReference type="GO" id="GO:0006641">
    <property type="term" value="P:triglyceride metabolic process"/>
    <property type="evidence" value="ECO:0007669"/>
    <property type="project" value="Ensembl"/>
</dbReference>
<dbReference type="GO" id="GO:0034197">
    <property type="term" value="P:triglyceride transport"/>
    <property type="evidence" value="ECO:0000314"/>
    <property type="project" value="UniProtKB"/>
</dbReference>
<dbReference type="GO" id="GO:0034379">
    <property type="term" value="P:very-low-density lipoprotein particle assembly"/>
    <property type="evidence" value="ECO:0000304"/>
    <property type="project" value="Reactome"/>
</dbReference>
<dbReference type="FunFam" id="2.30.230.10:FF:000001">
    <property type="entry name" value="Microsomal triglyceride transfer protein large subunit"/>
    <property type="match status" value="1"/>
</dbReference>
<dbReference type="FunFam" id="1.25.10.20:FF:000001">
    <property type="entry name" value="microsomal triglyceride transfer protein large subunit"/>
    <property type="match status" value="1"/>
</dbReference>
<dbReference type="Gene3D" id="2.30.230.10">
    <property type="entry name" value="Lipovitellin, beta-sheet shell regions, chain A"/>
    <property type="match status" value="1"/>
</dbReference>
<dbReference type="Gene3D" id="1.25.10.20">
    <property type="entry name" value="Vitellinogen, superhelical"/>
    <property type="match status" value="1"/>
</dbReference>
<dbReference type="InterPro" id="IPR015819">
    <property type="entry name" value="Lipid_transp_b-sht_shell"/>
</dbReference>
<dbReference type="InterPro" id="IPR011030">
    <property type="entry name" value="Lipovitellin_superhlx_dom"/>
</dbReference>
<dbReference type="InterPro" id="IPR045811">
    <property type="entry name" value="MTP_lip-bd"/>
</dbReference>
<dbReference type="InterPro" id="IPR039988">
    <property type="entry name" value="MTTP"/>
</dbReference>
<dbReference type="InterPro" id="IPR015816">
    <property type="entry name" value="Vitellinogen_b-sht_N"/>
</dbReference>
<dbReference type="InterPro" id="IPR001747">
    <property type="entry name" value="Vitellogenin_N"/>
</dbReference>
<dbReference type="PANTHER" id="PTHR13024:SF1">
    <property type="entry name" value="MICROSOMAL TRIGLYCERIDE TRANSFER PROTEIN LARGE SUBUNIT"/>
    <property type="match status" value="1"/>
</dbReference>
<dbReference type="PANTHER" id="PTHR13024">
    <property type="entry name" value="MICROSOMAL TRIGLYCERIDE TRANSFER PROTEIN, LARGE SUBUNIT"/>
    <property type="match status" value="1"/>
</dbReference>
<dbReference type="Pfam" id="PF19444">
    <property type="entry name" value="MTP_lip_bd"/>
    <property type="match status" value="1"/>
</dbReference>
<dbReference type="Pfam" id="PF01347">
    <property type="entry name" value="Vitellogenin_N"/>
    <property type="match status" value="1"/>
</dbReference>
<dbReference type="SMART" id="SM00638">
    <property type="entry name" value="LPD_N"/>
    <property type="match status" value="1"/>
</dbReference>
<dbReference type="SUPFAM" id="SSF56968">
    <property type="entry name" value="Lipovitellin-phosvitin complex, beta-sheet shell regions"/>
    <property type="match status" value="1"/>
</dbReference>
<dbReference type="SUPFAM" id="SSF48431">
    <property type="entry name" value="Lipovitellin-phosvitin complex, superhelical domain"/>
    <property type="match status" value="1"/>
</dbReference>
<dbReference type="PROSITE" id="PS51211">
    <property type="entry name" value="VITELLOGENIN"/>
    <property type="match status" value="1"/>
</dbReference>
<accession>P55157</accession>
<accession>A8K428</accession>
<accession>Q08AM4</accession>
<accession>Q6P5T3</accession>
<evidence type="ECO:0000250" key="1">
    <source>
        <dbReference type="UniProtKB" id="O08601"/>
    </source>
</evidence>
<evidence type="ECO:0000255" key="2"/>
<evidence type="ECO:0000255" key="3">
    <source>
        <dbReference type="PROSITE-ProRule" id="PRU00557"/>
    </source>
</evidence>
<evidence type="ECO:0000269" key="4">
    <source>
    </source>
</evidence>
<evidence type="ECO:0000269" key="5">
    <source>
    </source>
</evidence>
<evidence type="ECO:0000269" key="6">
    <source>
    </source>
</evidence>
<evidence type="ECO:0000269" key="7">
    <source>
    </source>
</evidence>
<evidence type="ECO:0000269" key="8">
    <source>
    </source>
</evidence>
<evidence type="ECO:0000269" key="9">
    <source>
    </source>
</evidence>
<evidence type="ECO:0000269" key="10">
    <source>
    </source>
</evidence>
<evidence type="ECO:0000269" key="11">
    <source>
    </source>
</evidence>
<evidence type="ECO:0000269" key="12">
    <source>
    </source>
</evidence>
<evidence type="ECO:0000269" key="13">
    <source>
    </source>
</evidence>
<evidence type="ECO:0000269" key="14">
    <source>
    </source>
</evidence>
<evidence type="ECO:0000269" key="15">
    <source>
    </source>
</evidence>
<evidence type="ECO:0000269" key="16">
    <source>
    </source>
</evidence>
<evidence type="ECO:0000269" key="17">
    <source>
    </source>
</evidence>
<evidence type="ECO:0000269" key="18">
    <source>
    </source>
</evidence>
<evidence type="ECO:0000303" key="19">
    <source>
    </source>
</evidence>
<evidence type="ECO:0000305" key="20"/>
<evidence type="ECO:0000305" key="21">
    <source>
    </source>
</evidence>
<evidence type="ECO:0007829" key="22">
    <source>
        <dbReference type="PDB" id="8EOJ"/>
    </source>
</evidence>
<reference key="1">
    <citation type="journal article" date="1993" name="Hum. Mol. Genet.">
        <title>Abetalipoproteinemia is caused by defects of the gene encoding the 97 kDa subunit of a microsomal triglyceride transfer protein.</title>
        <authorList>
            <person name="Shoulders C.C."/>
            <person name="Brett D.J."/>
            <person name="Bayliss J.D."/>
            <person name="Narcisi T.M.E."/>
            <person name="Jarmuz A."/>
            <person name="Grantham T.T."/>
            <person name="Leoni P.R.D."/>
            <person name="Bhattacharya S."/>
            <person name="Pease R.J."/>
            <person name="Cullen P.M."/>
            <person name="Levi S."/>
            <person name="Byfield P.G.H."/>
            <person name="Purkiss P."/>
            <person name="Scott J."/>
        </authorList>
    </citation>
    <scope>NUCLEOTIDE SEQUENCE [MRNA] (ISOFORM 1)</scope>
    <source>
        <tissue>Small intestine</tissue>
    </source>
</reference>
<reference key="2">
    <citation type="journal article" date="1993" name="Nature">
        <title>Cloning and gene defects in microsomal triglyceride transfer protein associated with abetalipoproteinaemia.</title>
        <authorList>
            <person name="Sharp D."/>
            <person name="Blinderman L."/>
            <person name="Combs K.A."/>
            <person name="Kienzle B."/>
            <person name="Ricci B."/>
            <person name="Wager-Smith K."/>
            <person name="Gil C.M."/>
            <person name="Turck C.W."/>
            <person name="Bouma M.-E."/>
            <person name="Rader D.J."/>
            <person name="Aggerbeck L.P."/>
            <person name="Gregg R.E."/>
            <person name="Gordon D.A."/>
            <person name="Wetterau J.R."/>
        </authorList>
    </citation>
    <scope>NUCLEOTIDE SEQUENCE [MRNA] (ISOFORM 1)</scope>
    <source>
        <tissue>Liver</tissue>
    </source>
</reference>
<reference key="3">
    <citation type="journal article" date="1994" name="Biochemistry">
        <title>Human microsomal triglyceride transfer protein large subunit gene structure.</title>
        <authorList>
            <person name="Sharp D."/>
            <person name="Ricci B."/>
            <person name="Kienzle B."/>
            <person name="Lin M.C."/>
            <person name="Wetterau J.R."/>
        </authorList>
    </citation>
    <scope>NUCLEOTIDE SEQUENCE [GENOMIC DNA]</scope>
</reference>
<reference key="4">
    <citation type="journal article" date="2004" name="Nat. Genet.">
        <title>Complete sequencing and characterization of 21,243 full-length human cDNAs.</title>
        <authorList>
            <person name="Ota T."/>
            <person name="Suzuki Y."/>
            <person name="Nishikawa T."/>
            <person name="Otsuki T."/>
            <person name="Sugiyama T."/>
            <person name="Irie R."/>
            <person name="Wakamatsu A."/>
            <person name="Hayashi K."/>
            <person name="Sato H."/>
            <person name="Nagai K."/>
            <person name="Kimura K."/>
            <person name="Makita H."/>
            <person name="Sekine M."/>
            <person name="Obayashi M."/>
            <person name="Nishi T."/>
            <person name="Shibahara T."/>
            <person name="Tanaka T."/>
            <person name="Ishii S."/>
            <person name="Yamamoto J."/>
            <person name="Saito K."/>
            <person name="Kawai Y."/>
            <person name="Isono Y."/>
            <person name="Nakamura Y."/>
            <person name="Nagahari K."/>
            <person name="Murakami K."/>
            <person name="Yasuda T."/>
            <person name="Iwayanagi T."/>
            <person name="Wagatsuma M."/>
            <person name="Shiratori A."/>
            <person name="Sudo H."/>
            <person name="Hosoiri T."/>
            <person name="Kaku Y."/>
            <person name="Kodaira H."/>
            <person name="Kondo H."/>
            <person name="Sugawara M."/>
            <person name="Takahashi M."/>
            <person name="Kanda K."/>
            <person name="Yokoi T."/>
            <person name="Furuya T."/>
            <person name="Kikkawa E."/>
            <person name="Omura Y."/>
            <person name="Abe K."/>
            <person name="Kamihara K."/>
            <person name="Katsuta N."/>
            <person name="Sato K."/>
            <person name="Tanikawa M."/>
            <person name="Yamazaki M."/>
            <person name="Ninomiya K."/>
            <person name="Ishibashi T."/>
            <person name="Yamashita H."/>
            <person name="Murakawa K."/>
            <person name="Fujimori K."/>
            <person name="Tanai H."/>
            <person name="Kimata M."/>
            <person name="Watanabe M."/>
            <person name="Hiraoka S."/>
            <person name="Chiba Y."/>
            <person name="Ishida S."/>
            <person name="Ono Y."/>
            <person name="Takiguchi S."/>
            <person name="Watanabe S."/>
            <person name="Yosida M."/>
            <person name="Hotuta T."/>
            <person name="Kusano J."/>
            <person name="Kanehori K."/>
            <person name="Takahashi-Fujii A."/>
            <person name="Hara H."/>
            <person name="Tanase T.-O."/>
            <person name="Nomura Y."/>
            <person name="Togiya S."/>
            <person name="Komai F."/>
            <person name="Hara R."/>
            <person name="Takeuchi K."/>
            <person name="Arita M."/>
            <person name="Imose N."/>
            <person name="Musashino K."/>
            <person name="Yuuki H."/>
            <person name="Oshima A."/>
            <person name="Sasaki N."/>
            <person name="Aotsuka S."/>
            <person name="Yoshikawa Y."/>
            <person name="Matsunawa H."/>
            <person name="Ichihara T."/>
            <person name="Shiohata N."/>
            <person name="Sano S."/>
            <person name="Moriya S."/>
            <person name="Momiyama H."/>
            <person name="Satoh N."/>
            <person name="Takami S."/>
            <person name="Terashima Y."/>
            <person name="Suzuki O."/>
            <person name="Nakagawa S."/>
            <person name="Senoh A."/>
            <person name="Mizoguchi H."/>
            <person name="Goto Y."/>
            <person name="Shimizu F."/>
            <person name="Wakebe H."/>
            <person name="Hishigaki H."/>
            <person name="Watanabe T."/>
            <person name="Sugiyama A."/>
            <person name="Takemoto M."/>
            <person name="Kawakami B."/>
            <person name="Yamazaki M."/>
            <person name="Watanabe K."/>
            <person name="Kumagai A."/>
            <person name="Itakura S."/>
            <person name="Fukuzumi Y."/>
            <person name="Fujimori Y."/>
            <person name="Komiyama M."/>
            <person name="Tashiro H."/>
            <person name="Tanigami A."/>
            <person name="Fujiwara T."/>
            <person name="Ono T."/>
            <person name="Yamada K."/>
            <person name="Fujii Y."/>
            <person name="Ozaki K."/>
            <person name="Hirao M."/>
            <person name="Ohmori Y."/>
            <person name="Kawabata A."/>
            <person name="Hikiji T."/>
            <person name="Kobatake N."/>
            <person name="Inagaki H."/>
            <person name="Ikema Y."/>
            <person name="Okamoto S."/>
            <person name="Okitani R."/>
            <person name="Kawakami T."/>
            <person name="Noguchi S."/>
            <person name="Itoh T."/>
            <person name="Shigeta K."/>
            <person name="Senba T."/>
            <person name="Matsumura K."/>
            <person name="Nakajima Y."/>
            <person name="Mizuno T."/>
            <person name="Morinaga M."/>
            <person name="Sasaki M."/>
            <person name="Togashi T."/>
            <person name="Oyama M."/>
            <person name="Hata H."/>
            <person name="Watanabe M."/>
            <person name="Komatsu T."/>
            <person name="Mizushima-Sugano J."/>
            <person name="Satoh T."/>
            <person name="Shirai Y."/>
            <person name="Takahashi Y."/>
            <person name="Nakagawa K."/>
            <person name="Okumura K."/>
            <person name="Nagase T."/>
            <person name="Nomura N."/>
            <person name="Kikuchi H."/>
            <person name="Masuho Y."/>
            <person name="Yamashita R."/>
            <person name="Nakai K."/>
            <person name="Yada T."/>
            <person name="Nakamura Y."/>
            <person name="Ohara O."/>
            <person name="Isogai T."/>
            <person name="Sugano S."/>
        </authorList>
    </citation>
    <scope>NUCLEOTIDE SEQUENCE [LARGE SCALE MRNA] (ISOFORM 1)</scope>
    <source>
        <tissue>Kidney</tissue>
    </source>
</reference>
<reference key="5">
    <citation type="journal article" date="2005" name="Nature">
        <title>Generation and annotation of the DNA sequences of human chromosomes 2 and 4.</title>
        <authorList>
            <person name="Hillier L.W."/>
            <person name="Graves T.A."/>
            <person name="Fulton R.S."/>
            <person name="Fulton L.A."/>
            <person name="Pepin K.H."/>
            <person name="Minx P."/>
            <person name="Wagner-McPherson C."/>
            <person name="Layman D."/>
            <person name="Wylie K."/>
            <person name="Sekhon M."/>
            <person name="Becker M.C."/>
            <person name="Fewell G.A."/>
            <person name="Delehaunty K.D."/>
            <person name="Miner T.L."/>
            <person name="Nash W.E."/>
            <person name="Kremitzki C."/>
            <person name="Oddy L."/>
            <person name="Du H."/>
            <person name="Sun H."/>
            <person name="Bradshaw-Cordum H."/>
            <person name="Ali J."/>
            <person name="Carter J."/>
            <person name="Cordes M."/>
            <person name="Harris A."/>
            <person name="Isak A."/>
            <person name="van Brunt A."/>
            <person name="Nguyen C."/>
            <person name="Du F."/>
            <person name="Courtney L."/>
            <person name="Kalicki J."/>
            <person name="Ozersky P."/>
            <person name="Abbott S."/>
            <person name="Armstrong J."/>
            <person name="Belter E.A."/>
            <person name="Caruso L."/>
            <person name="Cedroni M."/>
            <person name="Cotton M."/>
            <person name="Davidson T."/>
            <person name="Desai A."/>
            <person name="Elliott G."/>
            <person name="Erb T."/>
            <person name="Fronick C."/>
            <person name="Gaige T."/>
            <person name="Haakenson W."/>
            <person name="Haglund K."/>
            <person name="Holmes A."/>
            <person name="Harkins R."/>
            <person name="Kim K."/>
            <person name="Kruchowski S.S."/>
            <person name="Strong C.M."/>
            <person name="Grewal N."/>
            <person name="Goyea E."/>
            <person name="Hou S."/>
            <person name="Levy A."/>
            <person name="Martinka S."/>
            <person name="Mead K."/>
            <person name="McLellan M.D."/>
            <person name="Meyer R."/>
            <person name="Randall-Maher J."/>
            <person name="Tomlinson C."/>
            <person name="Dauphin-Kohlberg S."/>
            <person name="Kozlowicz-Reilly A."/>
            <person name="Shah N."/>
            <person name="Swearengen-Shahid S."/>
            <person name="Snider J."/>
            <person name="Strong J.T."/>
            <person name="Thompson J."/>
            <person name="Yoakum M."/>
            <person name="Leonard S."/>
            <person name="Pearman C."/>
            <person name="Trani L."/>
            <person name="Radionenko M."/>
            <person name="Waligorski J.E."/>
            <person name="Wang C."/>
            <person name="Rock S.M."/>
            <person name="Tin-Wollam A.-M."/>
            <person name="Maupin R."/>
            <person name="Latreille P."/>
            <person name="Wendl M.C."/>
            <person name="Yang S.-P."/>
            <person name="Pohl C."/>
            <person name="Wallis J.W."/>
            <person name="Spieth J."/>
            <person name="Bieri T.A."/>
            <person name="Berkowicz N."/>
            <person name="Nelson J.O."/>
            <person name="Osborne J."/>
            <person name="Ding L."/>
            <person name="Meyer R."/>
            <person name="Sabo A."/>
            <person name="Shotland Y."/>
            <person name="Sinha P."/>
            <person name="Wohldmann P.E."/>
            <person name="Cook L.L."/>
            <person name="Hickenbotham M.T."/>
            <person name="Eldred J."/>
            <person name="Williams D."/>
            <person name="Jones T.A."/>
            <person name="She X."/>
            <person name="Ciccarelli F.D."/>
            <person name="Izaurralde E."/>
            <person name="Taylor J."/>
            <person name="Schmutz J."/>
            <person name="Myers R.M."/>
            <person name="Cox D.R."/>
            <person name="Huang X."/>
            <person name="McPherson J.D."/>
            <person name="Mardis E.R."/>
            <person name="Clifton S.W."/>
            <person name="Warren W.C."/>
            <person name="Chinwalla A.T."/>
            <person name="Eddy S.R."/>
            <person name="Marra M.A."/>
            <person name="Ovcharenko I."/>
            <person name="Furey T.S."/>
            <person name="Miller W."/>
            <person name="Eichler E.E."/>
            <person name="Bork P."/>
            <person name="Suyama M."/>
            <person name="Torrents D."/>
            <person name="Waterston R.H."/>
            <person name="Wilson R.K."/>
        </authorList>
    </citation>
    <scope>NUCLEOTIDE SEQUENCE [LARGE SCALE GENOMIC DNA]</scope>
</reference>
<reference key="6">
    <citation type="journal article" date="2004" name="Genome Res.">
        <title>The status, quality, and expansion of the NIH full-length cDNA project: the Mammalian Gene Collection (MGC).</title>
        <authorList>
            <consortium name="The MGC Project Team"/>
        </authorList>
    </citation>
    <scope>NUCLEOTIDE SEQUENCE [LARGE SCALE MRNA] (ISOFORMS 1 AND 2)</scope>
    <source>
        <tissue>Blood vessel</tissue>
    </source>
</reference>
<reference key="7">
    <citation type="journal article" date="1994" name="J. Biol. Chem.">
        <title>Transcriptional regulation of human and hamster microsomal triglyceride transfer protein genes. Cell type-specific expression and response to metabolic regulators.</title>
        <authorList>
            <person name="Hagan D.L."/>
            <person name="Kienzle B."/>
            <person name="Jamil H."/>
            <person name="Hariharan N."/>
        </authorList>
    </citation>
    <scope>TISSUE SPECIFICITY</scope>
    <scope>INDUCTION</scope>
</reference>
<reference key="8">
    <citation type="journal article" date="1994" name="Nat. Struct. Biol.">
        <title>The abetalipoproteinemia gene is a member of the vitellogenin family and encodes an alpha-helical domain.</title>
        <authorList>
            <person name="Shoulders C.C."/>
            <person name="Narcisi T.M.E."/>
            <person name="Read J."/>
            <person name="Chester S.A."/>
            <person name="Brett D.J."/>
            <person name="Scott J."/>
            <person name="Anderson T.A."/>
            <person name="Levitt D.G."/>
            <person name="Banaszak L.J."/>
        </authorList>
    </citation>
    <scope>SIMILARITY TO VITELLOGENINS</scope>
</reference>
<reference key="9">
    <citation type="journal article" date="1995" name="Am. J. Hum. Genet.">
        <title>Mutations of the microsomal triglyceride-transfer-protein gene in abetalipoproteinemia.</title>
        <authorList>
            <person name="Narcisi T.M.E."/>
            <person name="Shoulders C.C."/>
            <person name="Chester S.A."/>
            <person name="Read J."/>
            <person name="Brett D.J."/>
            <person name="Harrison G.B."/>
            <person name="Grantham T.T."/>
            <person name="Fox M.F."/>
            <person name="Povey S."/>
            <person name="de Bruin T.W.A."/>
            <person name="Erkelens D.W."/>
            <person name="Muller D.P.R."/>
            <person name="Lloyd J.K."/>
            <person name="Scott J."/>
        </authorList>
    </citation>
    <scope>MUTAGENESIS OF CYS-878</scope>
</reference>
<reference key="10">
    <citation type="journal article" date="1996" name="Proc. Natl. Acad. Sci. U.S.A.">
        <title>An inhibitor of the microsomal triglyceride transfer protein inhibits apoB secretion from HepG2 cells.</title>
        <authorList>
            <person name="Jamil H."/>
            <person name="Gordon D.A."/>
            <person name="Eustice D.C."/>
            <person name="Brooks C.M."/>
            <person name="Dickson J.K. Jr."/>
            <person name="Chen Y."/>
            <person name="Ricci B."/>
            <person name="Chu C.H."/>
            <person name="Harrity T.W."/>
            <person name="Ciosek C.P. Jr."/>
            <person name="Biller S.A."/>
            <person name="Gregg R.E."/>
            <person name="Wetterau J.R."/>
        </authorList>
    </citation>
    <scope>FUNCTION</scope>
    <scope>CATALYTIC ACTIVITY</scope>
</reference>
<reference key="11">
    <citation type="journal article" date="2005" name="J. Lipid Res.">
        <title>Transfer of cholesteryl esters and phospholipids as well as net deposition by microsomal triglyceride transfer protein.</title>
        <authorList>
            <person name="Rava P."/>
            <person name="Athar H."/>
            <person name="Johnson C."/>
            <person name="Hussain M.M."/>
        </authorList>
    </citation>
    <scope>FUNCTION</scope>
    <scope>CATALYTIC ACTIVITY</scope>
</reference>
<reference key="12">
    <citation type="journal article" date="2006" name="J. Biol. Chem.">
        <title>Phospholipid transfer activity of microsomal triacylglycerol transfer protein is sufficient for the assembly and secretion of apolipoprotein B lipoproteins.</title>
        <authorList>
            <person name="Rava P."/>
            <person name="Ojakian G.K."/>
            <person name="Shelness G.S."/>
            <person name="Hussain M.M."/>
        </authorList>
    </citation>
    <scope>FUNCTION</scope>
    <scope>CATALYTIC ACTIVITY</scope>
    <scope>SUBCELLULAR LOCATION</scope>
    <scope>INTERACTION WITH P4HB</scope>
</reference>
<reference key="13">
    <citation type="journal article" date="2011" name="BMC Syst. Biol.">
        <title>Initial characterization of the human central proteome.</title>
        <authorList>
            <person name="Burkard T.R."/>
            <person name="Planyavsky M."/>
            <person name="Kaupe I."/>
            <person name="Breitwieser F.P."/>
            <person name="Buerckstuemmer T."/>
            <person name="Bennett K.L."/>
            <person name="Superti-Furga G."/>
            <person name="Colinge J."/>
        </authorList>
    </citation>
    <scope>IDENTIFICATION BY MASS SPECTROMETRY [LARGE SCALE ANALYSIS]</scope>
</reference>
<reference key="14">
    <citation type="journal article" date="2013" name="J. Lipid Res.">
        <title>Loss of both phospholipid and triglyceride transfer activities of microsomal triglyceride transfer protein in abetalipoproteinemia.</title>
        <authorList>
            <person name="Khatun I."/>
            <person name="Walsh M.T."/>
            <person name="Hussain M.M."/>
        </authorList>
    </citation>
    <scope>FUNCTION</scope>
    <scope>INTERACTION WITH P4HB</scope>
    <scope>SUBCELLULAR LOCATION</scope>
    <scope>CHARACTERIZATION OF VARIANTS ABL HIS-540; ILE-590; GLU-746 AND TYR-780</scope>
    <scope>CHARACTERIZATION OF VARIANT ALA-384</scope>
</reference>
<reference key="15">
    <citation type="journal article" date="2014" name="J. Proteomics">
        <title>An enzyme assisted RP-RPLC approach for in-depth analysis of human liver phosphoproteome.</title>
        <authorList>
            <person name="Bian Y."/>
            <person name="Song C."/>
            <person name="Cheng K."/>
            <person name="Dong M."/>
            <person name="Wang F."/>
            <person name="Huang J."/>
            <person name="Sun D."/>
            <person name="Wang L."/>
            <person name="Ye M."/>
            <person name="Zou H."/>
        </authorList>
    </citation>
    <scope>IDENTIFICATION BY MASS SPECTROMETRY [LARGE SCALE ANALYSIS]</scope>
    <source>
        <tissue>Liver</tissue>
    </source>
</reference>
<reference key="16">
    <citation type="journal article" date="1996" name="J. Biol. Chem.">
        <title>A novel abetalipoproteinemia genotype. Identification of a missense mutation in the 97-kDa subunit of the microsomal triglyceride transfer protein that prevents complex formation with protein disulfide isomerase.</title>
        <authorList>
            <person name="Rehberg E.F."/>
            <person name="Samson-Bouma M.-E."/>
            <person name="Kienzle B."/>
            <person name="Blinderman L."/>
            <person name="Jamil H."/>
            <person name="Wetterau J.R."/>
            <person name="Aggerbeck L.P."/>
            <person name="Gordon D.A."/>
        </authorList>
    </citation>
    <scope>VARIANT ABL HIS-540</scope>
    <scope>VARIANTS GLN-297 AND ALA-384</scope>
    <scope>CHARACTERIZATION OF VARIANT ABL HIS-540</scope>
    <scope>CHARACTERIZATION OF VARIANTS GLN-297 AND ALA-384</scope>
    <scope>MUTAGENESIS OF ARG-540</scope>
    <scope>FUNCTION</scope>
    <scope>INVOLVEMENT IN ABL</scope>
</reference>
<reference key="17">
    <citation type="journal article" date="2000" name="Hum. Mutat.">
        <title>Microsomal triglyceride transfer protein (MTP) gene mutations in Canadian subjects with abetalipoproteinemia.</title>
        <authorList>
            <person name="Wang J."/>
            <person name="Hegele R.A."/>
        </authorList>
    </citation>
    <scope>VARIANTS ABL HIS-540; ILE-590 AND GLU-746</scope>
</reference>
<reference key="18">
    <citation type="journal article" date="2000" name="J. Lipid Res.">
        <title>Novel mutations in the microsomal triglyceride transfer protein gene causing abetalipoproteinemia.</title>
        <authorList>
            <person name="Ohashi K."/>
            <person name="Ishibashi S."/>
            <person name="Osuga J."/>
            <person name="Tozawa R."/>
            <person name="Harada K."/>
            <person name="Yahagi N."/>
            <person name="Shionoiri F."/>
            <person name="Iizuka Y."/>
            <person name="Tamura Y."/>
            <person name="Nagai R."/>
            <person name="Illingworth D.R."/>
            <person name="Gotoda T."/>
            <person name="Yamada N."/>
        </authorList>
    </citation>
    <scope>VARIANT ABL TYR-780</scope>
</reference>
<reference key="19">
    <citation type="journal article" date="2002" name="J. Lipid Res.">
        <title>Variants of the microsomal triglyceride transfer protein gene are associated with plasma cholesterol levels and body mass index.</title>
        <authorList>
            <person name="Ledmyr H."/>
            <person name="Karpe F."/>
            <person name="Lundahl B."/>
            <person name="McKinnon M."/>
            <person name="Skoglund-Andersson C."/>
            <person name="Ehrenborg E."/>
        </authorList>
    </citation>
    <scope>VARIANTS HIS-95; THR-128; GLU-244 AND GLN-297</scope>
</reference>
<reference key="20">
    <citation type="journal article" date="2004" name="Biochim. Biophys. Acta">
        <title>Hypobetalipoproteinemia with an apparently recessive inheritance due to a 'de novo' mutation of apolipoprotein B.</title>
        <authorList>
            <person name="Lancellotti S."/>
            <person name="Di Leo E."/>
            <person name="Penacchioni J.Y."/>
            <person name="Balli F."/>
            <person name="Viola L."/>
            <person name="Bertolini S."/>
            <person name="Calandra S."/>
            <person name="Tarugi P."/>
        </authorList>
    </citation>
    <scope>VARIANTS THR-128; ILE-168 AND GLN-297</scope>
</reference>
<reference key="21">
    <citation type="journal article" date="2012" name="J. Lipid Res.">
        <title>Molecular and functional analysis of two new MTTP gene mutations in an atypical case of abetalipoproteinemia.</title>
        <authorList>
            <person name="Di Filippo M."/>
            <person name="Crehalet H."/>
            <person name="Samson-Bouma M.E."/>
            <person name="Bonnet V."/>
            <person name="Aggerbeck L.P."/>
            <person name="Rabes J.P."/>
            <person name="Gottrand F."/>
            <person name="Luc G."/>
            <person name="Bozon D."/>
            <person name="Sassolas A."/>
        </authorList>
    </citation>
    <scope>VARIANT ABL HIS-435</scope>
    <scope>CHARACTERIZATION OF VARIANT ABL HIS-435</scope>
    <scope>FUNCTION</scope>
    <scope>SUBCELLULAR LOCATION</scope>
    <scope>MUTAGENESIS OF LEU-435</scope>
</reference>
<reference key="22">
    <citation type="journal article" date="2014" name="Biochim. Biophys. Acta">
        <title>Novel missense MTTP gene mutations causing abetalipoproteinemia.</title>
        <authorList>
            <person name="Miller S.A."/>
            <person name="Burnett J.R."/>
            <person name="Leonis M.A."/>
            <person name="McKnight C.J."/>
            <person name="van Bockxmeer F.M."/>
            <person name="Hooper A.J."/>
        </authorList>
    </citation>
    <scope>VARIANTS ABL ARG-264; HIS-528; CYS-540 AND SER-649</scope>
    <scope>CHARACTERIZATION OF VARIANTS ABL ARG-264; HIS-528; CYS-540; HIS-540 AND SER-649</scope>
    <scope>FUNCTION</scope>
    <scope>INTERACTION WITH APOB AND P4HB</scope>
    <scope>MUTAGENESIS OF TYR-528</scope>
</reference>
<reference key="23">
    <citation type="journal article" date="2015" name="Circ. Cardiovasc. Genet.">
        <title>A novel abetalipoproteinemia missense mutation highlights the importance of N-Terminal beta-barrel in microsomal triglyceride transfer protein function.</title>
        <authorList>
            <person name="Walsh M.T."/>
            <person name="Iqbal J."/>
            <person name="Josekutty J."/>
            <person name="Soh J."/>
            <person name="Di Leo E."/>
            <person name="Oezaydin E."/>
            <person name="Guenduez M."/>
            <person name="Tarugi P."/>
            <person name="Hussain M.M."/>
        </authorList>
    </citation>
    <scope>VARIANT ABL VAL-169</scope>
    <scope>CHARACTERIZATION OF VARIANT ABL VAL-169</scope>
    <scope>FUNCTION</scope>
    <scope>INTERACTION WITH APOB AND P4HB</scope>
    <scope>SUBCELLULAR LOCATION</scope>
    <scope>MUTAGENESIS OF ASP-169; LYS-187 AND LYS-189</scope>
</reference>
<reference key="24">
    <citation type="journal article" date="2016" name="J. Clin. Lipidol.">
        <title>Novel APOB missense variants, A224T and V925L, in a black South African woman with marked hypocholesterolemia.</title>
        <authorList>
            <person name="Miller S.A."/>
            <person name="Hooper A.J."/>
            <person name="Mantiri G.A."/>
            <person name="Marais D."/>
            <person name="Tanyanyiwa D.M."/>
            <person name="McKnight J."/>
            <person name="Burnett J.R."/>
        </authorList>
    </citation>
    <scope>INTERACTION WITH APOB</scope>
</reference>
<gene>
    <name type="primary">MTTP</name>
    <name type="synonym">MTP</name>
</gene>
<organism>
    <name type="scientific">Homo sapiens</name>
    <name type="common">Human</name>
    <dbReference type="NCBI Taxonomy" id="9606"/>
    <lineage>
        <taxon>Eukaryota</taxon>
        <taxon>Metazoa</taxon>
        <taxon>Chordata</taxon>
        <taxon>Craniata</taxon>
        <taxon>Vertebrata</taxon>
        <taxon>Euteleostomi</taxon>
        <taxon>Mammalia</taxon>
        <taxon>Eutheria</taxon>
        <taxon>Euarchontoglires</taxon>
        <taxon>Primates</taxon>
        <taxon>Haplorrhini</taxon>
        <taxon>Catarrhini</taxon>
        <taxon>Hominidae</taxon>
        <taxon>Homo</taxon>
    </lineage>
</organism>
<feature type="signal peptide" evidence="2">
    <location>
        <begin position="1"/>
        <end position="18"/>
    </location>
</feature>
<feature type="chain" id="PRO_0000041593" description="Microsomal triglyceride transfer protein large subunit">
    <location>
        <begin position="19"/>
        <end position="894"/>
    </location>
</feature>
<feature type="domain" description="Vitellogenin" evidence="3">
    <location>
        <begin position="28"/>
        <end position="659"/>
    </location>
</feature>
<feature type="disulfide bond" evidence="3">
    <location>
        <begin position="174"/>
        <end position="194"/>
    </location>
</feature>
<feature type="splice variant" id="VSP_056325" description="In isoform 2." evidence="19">
    <original>EFYSYQNEAVAIENIKRG</original>
    <variation>GRLDSTTFSPTSYFSSLQ</variation>
    <location>
        <begin position="134"/>
        <end position="151"/>
    </location>
</feature>
<feature type="splice variant" id="VSP_056326" description="In isoform 2." evidence="19">
    <location>
        <begin position="152"/>
        <end position="894"/>
    </location>
</feature>
<feature type="sequence variant" id="VAR_014016" description="In dbSNP:rs61733139." evidence="6">
    <original>Q</original>
    <variation>H</variation>
    <location>
        <position position="95"/>
    </location>
</feature>
<feature type="sequence variant" id="VAR_052961" description="In dbSNP:rs2306986.">
    <original>E</original>
    <variation>D</variation>
    <location>
        <position position="98"/>
    </location>
</feature>
<feature type="sequence variant" id="VAR_014017" description="In dbSNP:rs3816873." evidence="6 7">
    <original>I</original>
    <variation>T</variation>
    <location>
        <position position="128"/>
    </location>
</feature>
<feature type="sequence variant" id="VAR_052962" description="In dbSNP:rs3792683.">
    <original>N</original>
    <variation>S</variation>
    <location>
        <position position="166"/>
    </location>
</feature>
<feature type="sequence variant" id="VAR_022658" description="In dbSNP:rs61750974." evidence="7">
    <original>V</original>
    <variation>I</variation>
    <location>
        <position position="168"/>
    </location>
</feature>
<feature type="sequence variant" id="VAR_074553" description="In ABL; no loss on localization to the endoplasmic reticulum; does not reduce interaction with APOB; inhibits interaction with P4HB/PDI; inhibits phospholipid or triglyceride transfer activity; inhibits apolipoprotein B secretion." evidence="13">
    <original>D</original>
    <variation>V</variation>
    <location>
        <position position="169"/>
    </location>
</feature>
<feature type="sequence variant" id="VAR_014018" description="In dbSNP:rs17599091." evidence="6">
    <original>Q</original>
    <variation>E</variation>
    <location>
        <position position="244"/>
    </location>
</feature>
<feature type="sequence variant" id="VAR_074554" description="In ABL; uncertain significance; does not reduce interaction with P4HB/PDI and APOB; does not reduce triglyceride transfer activity; dbSNP:rs1367079155." evidence="12">
    <original>G</original>
    <variation>R</variation>
    <location>
        <position position="264"/>
    </location>
</feature>
<feature type="sequence variant" id="VAR_010640" description="Does not inhibit apolipoprotein B secretion; dbSNP:rs2306985." evidence="6 7 18">
    <original>H</original>
    <variation>Q</variation>
    <location>
        <position position="297"/>
    </location>
</feature>
<feature type="sequence variant" id="VAR_010641" description="No loss on localization to the endoplasmic reticulum; does not reduce interaction with P4HB/PDI; reduces phospholipid or triglyceride transfer activity; does not inhibit apolipoprotein B secretion; dbSNP:rs17029215." evidence="11 18">
    <original>D</original>
    <variation>A</variation>
    <location>
        <position position="384"/>
    </location>
</feature>
<feature type="sequence variant" id="VAR_074555" description="In ABL; no loss on localization to the endoplasmic reticulum; inhibits triglyceride transfer activity." evidence="10">
    <original>L</original>
    <variation>H</variation>
    <location>
        <position position="435"/>
    </location>
</feature>
<feature type="sequence variant" id="VAR_074556" description="In ABL; does not reduce interaction with P4HB/PDI and APOB; inhibits triglyceride transfer activity; dbSNP:rs1485375137." evidence="12">
    <original>Y</original>
    <variation>H</variation>
    <location>
        <position position="528"/>
    </location>
</feature>
<feature type="sequence variant" id="VAR_074557" description="In ABL; does not reduce interaction with P4HB/PDI and APOB; inhibits triglyceride transfer activity; dbSNP:rs372321643." evidence="12">
    <original>R</original>
    <variation>C</variation>
    <location>
        <position position="540"/>
    </location>
</feature>
<feature type="sequence variant" id="VAR_010642" description="In ABL; no loss on localization to the endoplasmic reticulum; reduces interaction with P4HB/PDI; inhibits phospholipid or triglyceride transfer activity; inhibits apolipoprotein B secretion; dbSNP:rs199422220." evidence="4 11 12 18">
    <original>R</original>
    <variation>H</variation>
    <location>
        <position position="540"/>
    </location>
</feature>
<feature type="sequence variant" id="VAR_010643" description="In ABL; no loss on localization to the endoplasmic reticulum; does not reduce interaction with P4HB/PDI; inhibits phospholipid or triglyceride transfer activity; inhibits apolipoprotein B secretion; dbSNP:rs199422222." evidence="4 11">
    <original>S</original>
    <variation>I</variation>
    <location>
        <position position="590"/>
    </location>
</feature>
<feature type="sequence variant" id="VAR_074558" description="In ABL; uncertain significance; does not reduce interaction with P4HB/PDI and APOB; reduces triglyceride transfer activity." evidence="12">
    <original>N</original>
    <variation>S</variation>
    <location>
        <position position="649"/>
    </location>
</feature>
<feature type="sequence variant" id="VAR_010644" description="In ABL; no loss on localization to the endoplasmic reticulum; does not reduce interaction with P4HB/PDI; inhibits phospholipid or triglyceride transfer activity; inhibits apolipoprotein B secretion; dbSNP:rs767833468." evidence="4 11">
    <original>G</original>
    <variation>E</variation>
    <location>
        <position position="746"/>
    </location>
</feature>
<feature type="sequence variant" id="VAR_014019" description="In ABL; no loss on localization to the endoplasmic reticulum; does not reduce interaction with P4HB/PDI; inhibits phospholipid or triglyceride transfer activity; inhibits apolipoprotein B secretion; dbSNP:rs199422221." evidence="5 11">
    <original>N</original>
    <variation>Y</variation>
    <location>
        <position position="780"/>
    </location>
</feature>
<feature type="mutagenesis site" description="No loss on localization to the endoplasmic reticulum and does not reduce interaction with APOB or P4HB/PDI, does partially reduce phospholipid or triglyceride transfer activity and apolipoprotein B secretion." evidence="13">
    <original>D</original>
    <variation>E</variation>
    <location>
        <position position="169"/>
    </location>
</feature>
<feature type="mutagenesis site" description="No loss on localization to the endoplasmic reticulum and does not reduce interaction with APOB, but inhibits interaction with P4HB/PDI, phospholipid or triglyceride transfer activity and apolipoprotein B secretion." evidence="13">
    <original>K</original>
    <variation>L</variation>
    <location>
        <position position="187"/>
    </location>
</feature>
<feature type="mutagenesis site" description="No loss on localization to the endoplasmic reticulum, does not reduce interaction with APOB or P4HB/PDI, partially inhibits triglyceride transfer activity, does not inhibit phospholipid transfer activity and apolipoprotein B secretion." evidence="13">
    <original>K</original>
    <variation>R</variation>
    <location>
        <position position="187"/>
    </location>
</feature>
<feature type="mutagenesis site" description="No loss on localization to the endoplasmic reticulum and does not reduce interaction with APOB, but inhibits interaction with P4HB/PDI, phospholipid or triglyceride transfer activity and apolipoprotein B secretion." evidence="13">
    <original>K</original>
    <variation>L</variation>
    <location>
        <position position="189"/>
    </location>
</feature>
<feature type="mutagenesis site" description="No loss on localization to the endoplasmic reticulum, does not reduce interaction with APOB or P4HB/PDI, partially inhibits triglyceride transfer activity, does not inhibit phospholipid transfer activity and apolipoprotein B secretion." evidence="13">
    <original>K</original>
    <variation>R</variation>
    <location>
        <position position="189"/>
    </location>
</feature>
<feature type="mutagenesis site" description="No loss on localization to the endoplasmic reticulum. Inhibits triglyceride transfer activity." evidence="10">
    <original>L</original>
    <variation>E</variation>
    <location>
        <position position="435"/>
    </location>
</feature>
<feature type="mutagenesis site" description="No loss on localization to the endoplasmic reticulum. Does not inhibit triglyceride transfer activity." evidence="10">
    <original>L</original>
    <variation>V</variation>
    <location>
        <position position="435"/>
    </location>
</feature>
<feature type="mutagenesis site" description="Does not inhibit triglyceride transfer activity." evidence="12">
    <original>Y</original>
    <variation>F</variation>
    <location>
        <position position="528"/>
    </location>
</feature>
<feature type="mutagenesis site" description="Inhibits triglyceride transfer activity." evidence="12">
    <original>Y</original>
    <variation>K</variation>
    <location>
        <position position="528"/>
    </location>
</feature>
<feature type="mutagenesis site" description="Strongly reduces triglyceride transfer activity." evidence="12">
    <original>R</original>
    <variation>A</variation>
    <location>
        <position position="540"/>
    </location>
</feature>
<feature type="mutagenesis site" description="Does not inhibit triglyceride transfer activity and apolipoprotein B secretion." evidence="12 18">
    <original>R</original>
    <variation>K</variation>
    <location>
        <position position="540"/>
    </location>
</feature>
<feature type="mutagenesis site" description="Inhibits triglyceride transfer activity." evidence="16">
    <original>C</original>
    <variation>S</variation>
    <location>
        <position position="878"/>
    </location>
</feature>
<feature type="sequence conflict" description="In Ref. 2; CAA42200." evidence="20" ref="2">
    <original>F</original>
    <variation>L</variation>
    <location>
        <position position="585"/>
    </location>
</feature>
<feature type="strand" evidence="22">
    <location>
        <begin position="34"/>
        <end position="45"/>
    </location>
</feature>
<feature type="strand" evidence="22">
    <location>
        <begin position="47"/>
        <end position="50"/>
    </location>
</feature>
<feature type="strand" evidence="22">
    <location>
        <begin position="57"/>
        <end position="67"/>
    </location>
</feature>
<feature type="strand" evidence="22">
    <location>
        <begin position="77"/>
        <end position="92"/>
    </location>
</feature>
<feature type="strand" evidence="22">
    <location>
        <begin position="100"/>
        <end position="102"/>
    </location>
</feature>
<feature type="helix" evidence="22">
    <location>
        <begin position="107"/>
        <end position="111"/>
    </location>
</feature>
<feature type="helix" evidence="22">
    <location>
        <begin position="113"/>
        <end position="120"/>
    </location>
</feature>
<feature type="strand" evidence="22">
    <location>
        <begin position="123"/>
        <end position="128"/>
    </location>
</feature>
<feature type="strand" evidence="22">
    <location>
        <begin position="131"/>
        <end position="137"/>
    </location>
</feature>
<feature type="helix" evidence="22">
    <location>
        <begin position="143"/>
        <end position="153"/>
    </location>
</feature>
<feature type="helix" evidence="22">
    <location>
        <begin position="154"/>
        <end position="156"/>
    </location>
</feature>
<feature type="strand" evidence="22">
    <location>
        <begin position="163"/>
        <end position="166"/>
    </location>
</feature>
<feature type="strand" evidence="22">
    <location>
        <begin position="169"/>
        <end position="171"/>
    </location>
</feature>
<feature type="strand" evidence="22">
    <location>
        <begin position="173"/>
        <end position="180"/>
    </location>
</feature>
<feature type="strand" evidence="22">
    <location>
        <begin position="182"/>
        <end position="195"/>
    </location>
</feature>
<feature type="strand" evidence="22">
    <location>
        <begin position="218"/>
        <end position="232"/>
    </location>
</feature>
<feature type="strand" evidence="22">
    <location>
        <begin position="236"/>
        <end position="238"/>
    </location>
</feature>
<feature type="strand" evidence="22">
    <location>
        <begin position="248"/>
        <end position="261"/>
    </location>
</feature>
<feature type="helix" evidence="22">
    <location>
        <begin position="274"/>
        <end position="280"/>
    </location>
</feature>
<feature type="strand" evidence="22">
    <location>
        <begin position="285"/>
        <end position="287"/>
    </location>
</feature>
<feature type="strand" evidence="22">
    <location>
        <begin position="297"/>
        <end position="300"/>
    </location>
</feature>
<feature type="turn" evidence="22">
    <location>
        <begin position="304"/>
        <end position="306"/>
    </location>
</feature>
<feature type="helix" evidence="22">
    <location>
        <begin position="307"/>
        <end position="312"/>
    </location>
</feature>
<feature type="helix" evidence="22">
    <location>
        <begin position="317"/>
        <end position="319"/>
    </location>
</feature>
<feature type="helix" evidence="22">
    <location>
        <begin position="323"/>
        <end position="337"/>
    </location>
</feature>
<feature type="helix" evidence="22">
    <location>
        <begin position="341"/>
        <end position="347"/>
    </location>
</feature>
<feature type="strand" evidence="22">
    <location>
        <begin position="353"/>
        <end position="355"/>
    </location>
</feature>
<feature type="helix" evidence="22">
    <location>
        <begin position="356"/>
        <end position="364"/>
    </location>
</feature>
<feature type="helix" evidence="22">
    <location>
        <begin position="369"/>
        <end position="378"/>
    </location>
</feature>
<feature type="helix" evidence="22">
    <location>
        <begin position="387"/>
        <end position="398"/>
    </location>
</feature>
<feature type="helix" evidence="22">
    <location>
        <begin position="405"/>
        <end position="416"/>
    </location>
</feature>
<feature type="helix" evidence="22">
    <location>
        <begin position="422"/>
        <end position="440"/>
    </location>
</feature>
<feature type="turn" evidence="22">
    <location>
        <begin position="441"/>
        <end position="443"/>
    </location>
</feature>
<feature type="helix" evidence="22">
    <location>
        <begin position="448"/>
        <end position="462"/>
    </location>
</feature>
<feature type="helix" evidence="22">
    <location>
        <begin position="467"/>
        <end position="480"/>
    </location>
</feature>
<feature type="helix" evidence="22">
    <location>
        <begin position="483"/>
        <end position="485"/>
    </location>
</feature>
<feature type="helix" evidence="22">
    <location>
        <begin position="486"/>
        <end position="493"/>
    </location>
</feature>
<feature type="helix" evidence="22">
    <location>
        <begin position="498"/>
        <end position="510"/>
    </location>
</feature>
<feature type="helix" evidence="22">
    <location>
        <begin position="518"/>
        <end position="528"/>
    </location>
</feature>
<feature type="strand" evidence="22">
    <location>
        <begin position="531"/>
        <end position="533"/>
    </location>
</feature>
<feature type="helix" evidence="22">
    <location>
        <begin position="537"/>
        <end position="549"/>
    </location>
</feature>
<feature type="helix" evidence="22">
    <location>
        <begin position="554"/>
        <end position="563"/>
    </location>
</feature>
<feature type="turn" evidence="22">
    <location>
        <begin position="564"/>
        <end position="566"/>
    </location>
</feature>
<feature type="helix" evidence="22">
    <location>
        <begin position="569"/>
        <end position="584"/>
    </location>
</feature>
<feature type="helix" evidence="22">
    <location>
        <begin position="590"/>
        <end position="597"/>
    </location>
</feature>
<feature type="turn" evidence="22">
    <location>
        <begin position="600"/>
        <end position="602"/>
    </location>
</feature>
<feature type="helix" evidence="22">
    <location>
        <begin position="605"/>
        <end position="608"/>
    </location>
</feature>
<feature type="strand" evidence="22">
    <location>
        <begin position="617"/>
        <end position="623"/>
    </location>
</feature>
<feature type="strand" evidence="22">
    <location>
        <begin position="625"/>
        <end position="637"/>
    </location>
</feature>
<feature type="strand" evidence="22">
    <location>
        <begin position="643"/>
        <end position="654"/>
    </location>
</feature>
<feature type="strand" evidence="22">
    <location>
        <begin position="657"/>
        <end position="668"/>
    </location>
</feature>
<feature type="strand" evidence="22">
    <location>
        <begin position="690"/>
        <end position="698"/>
    </location>
</feature>
<feature type="strand" evidence="22">
    <location>
        <begin position="704"/>
        <end position="707"/>
    </location>
</feature>
<feature type="strand" evidence="22">
    <location>
        <begin position="728"/>
        <end position="737"/>
    </location>
</feature>
<feature type="strand" evidence="22">
    <location>
        <begin position="740"/>
        <end position="742"/>
    </location>
</feature>
<feature type="strand" evidence="22">
    <location>
        <begin position="748"/>
        <end position="761"/>
    </location>
</feature>
<feature type="strand" evidence="22">
    <location>
        <begin position="781"/>
        <end position="793"/>
    </location>
</feature>
<feature type="strand" evidence="22">
    <location>
        <begin position="795"/>
        <end position="810"/>
    </location>
</feature>
<feature type="strand" evidence="22">
    <location>
        <begin position="812"/>
        <end position="818"/>
    </location>
</feature>
<feature type="strand" evidence="22">
    <location>
        <begin position="820"/>
        <end position="823"/>
    </location>
</feature>
<feature type="strand" evidence="22">
    <location>
        <begin position="825"/>
        <end position="831"/>
    </location>
</feature>
<feature type="strand" evidence="22">
    <location>
        <begin position="835"/>
        <end position="846"/>
    </location>
</feature>
<feature type="strand" evidence="22">
    <location>
        <begin position="855"/>
        <end position="863"/>
    </location>
</feature>
<feature type="helix" evidence="22">
    <location>
        <begin position="872"/>
        <end position="878"/>
    </location>
</feature>
<feature type="turn" evidence="22">
    <location>
        <begin position="879"/>
        <end position="881"/>
    </location>
</feature>
<sequence>MILLAVLFLCFISSYSASVKGHTTGLSLNNDRLYKLTYSTEVLLDRGKGKLQDSVGYRISSNVDVALLWRNPDGDDDQLIQITMKDVNVENVNQQRGEKSIFKGKSPSKIMGKENLEALQRPTLLHLIHGKVKEFYSYQNEAVAIENIKRGLASLFQTQLSSGTTNEVDISGNCKVTYQAHQDKVIKIKALDSCKIARSGFTTPNQVLGVSSKATSVTTYKIEDSFVIAVLAEETHNFGLNFLQTIKGKIVSKQKLELKTTEAGPRLMSGKQAAAIIKAVDSKYTAIPIVGQVFQSHCKGCPSLSELWRSTRKYLQPDNLSKAEAVRNFLAFIQHLRTAKKEEILQILKMENKEVLPQLVDAVTSAQTSDSLEAILDFLDFKSDSSIILQERFLYACGFASHPNEELLRALISKFKGSIGSSDIRETVMIITGTLVRKLCQNEGCKLKAVVEAKKLILGGLEKAEKKEDTRMYLLALKNALLPEGIPSLLKYAEAGEGPISHLATTALQRYDLPFITDEVKKTLNRIYHQNRKVHEKTVRTAAAAIILNNNPSYMDVKNILLSIGELPQEMNKYMLAIVQDILRFEMPASKIVRRVLKEMVAHNYDRFSRSGSSSAYTGYIERSPRSASTYSLDILYSGSGILRRSNLNIFQYIGKAGLHGSQVVIEAQGLEALIAATPDEGEENLDSYAGMSAILFDVQLRPVTFFNGYSDLMSKMLSASGDPISVVKGLILLIDHSQELQLQSGLKANIEVQGGLAIDISGAMEFSLWYRESKTRVKNRVTVVITTDITVDSSFVKAGLETSTETEAGLEFISTVQFSQYPFLVCMQMDKDEAPFRQFEKKYERLSTGRGYVSQKRKESVLAGCEFPLHQENSEMCKVVFAPQPDSTSSGWF</sequence>
<name>MTP_HUMAN</name>